<keyword id="KW-0687">Ribonucleoprotein</keyword>
<keyword id="KW-0689">Ribosomal protein</keyword>
<keyword id="KW-0694">RNA-binding</keyword>
<keyword id="KW-0699">rRNA-binding</keyword>
<sequence>MGRSLKKGPFIADSLLKKVEKQNTDNDKSVIKTWSRSSTILPVMIGHTIAVHNGKAHIPVFITEQMIGHKLGEFAPTRTYRGHLRDKKGAR</sequence>
<accession>Q7TU27</accession>
<reference key="1">
    <citation type="journal article" date="2003" name="Nature">
        <title>Genome divergence in two Prochlorococcus ecotypes reflects oceanic niche differentiation.</title>
        <authorList>
            <person name="Rocap G."/>
            <person name="Larimer F.W."/>
            <person name="Lamerdin J.E."/>
            <person name="Malfatti S."/>
            <person name="Chain P."/>
            <person name="Ahlgren N.A."/>
            <person name="Arellano A."/>
            <person name="Coleman M."/>
            <person name="Hauser L."/>
            <person name="Hess W.R."/>
            <person name="Johnson Z.I."/>
            <person name="Land M.L."/>
            <person name="Lindell D."/>
            <person name="Post A.F."/>
            <person name="Regala W."/>
            <person name="Shah M."/>
            <person name="Shaw S.L."/>
            <person name="Steglich C."/>
            <person name="Sullivan M.B."/>
            <person name="Ting C.S."/>
            <person name="Tolonen A."/>
            <person name="Webb E.A."/>
            <person name="Zinser E.R."/>
            <person name="Chisholm S.W."/>
        </authorList>
    </citation>
    <scope>NUCLEOTIDE SEQUENCE [LARGE SCALE GENOMIC DNA]</scope>
    <source>
        <strain>CCMP1986 / NIES-2087 / MED4</strain>
    </source>
</reference>
<comment type="function">
    <text evidence="1">Protein S19 forms a complex with S13 that binds strongly to the 16S ribosomal RNA.</text>
</comment>
<comment type="similarity">
    <text evidence="1">Belongs to the universal ribosomal protein uS19 family.</text>
</comment>
<name>RS19_PROMP</name>
<protein>
    <recommendedName>
        <fullName evidence="1">Small ribosomal subunit protein uS19</fullName>
    </recommendedName>
    <alternativeName>
        <fullName evidence="2">30S ribosomal protein S19</fullName>
    </alternativeName>
</protein>
<gene>
    <name evidence="1" type="primary">rpsS</name>
    <name evidence="1" type="synonym">rps19</name>
    <name type="ordered locus">PMM1554</name>
</gene>
<dbReference type="EMBL" id="BX548174">
    <property type="protein sequence ID" value="CAE20013.1"/>
    <property type="molecule type" value="Genomic_DNA"/>
</dbReference>
<dbReference type="RefSeq" id="WP_011133182.1">
    <property type="nucleotide sequence ID" value="NC_005072.1"/>
</dbReference>
<dbReference type="SMR" id="Q7TU27"/>
<dbReference type="STRING" id="59919.PMM1554"/>
<dbReference type="KEGG" id="pmm:PMM1554"/>
<dbReference type="eggNOG" id="COG0185">
    <property type="taxonomic scope" value="Bacteria"/>
</dbReference>
<dbReference type="HOGENOM" id="CLU_144911_0_1_3"/>
<dbReference type="OrthoDB" id="9797833at2"/>
<dbReference type="Proteomes" id="UP000001026">
    <property type="component" value="Chromosome"/>
</dbReference>
<dbReference type="GO" id="GO:0005737">
    <property type="term" value="C:cytoplasm"/>
    <property type="evidence" value="ECO:0007669"/>
    <property type="project" value="UniProtKB-ARBA"/>
</dbReference>
<dbReference type="GO" id="GO:0015935">
    <property type="term" value="C:small ribosomal subunit"/>
    <property type="evidence" value="ECO:0007669"/>
    <property type="project" value="InterPro"/>
</dbReference>
<dbReference type="GO" id="GO:0019843">
    <property type="term" value="F:rRNA binding"/>
    <property type="evidence" value="ECO:0007669"/>
    <property type="project" value="UniProtKB-UniRule"/>
</dbReference>
<dbReference type="GO" id="GO:0003735">
    <property type="term" value="F:structural constituent of ribosome"/>
    <property type="evidence" value="ECO:0007669"/>
    <property type="project" value="InterPro"/>
</dbReference>
<dbReference type="GO" id="GO:0000028">
    <property type="term" value="P:ribosomal small subunit assembly"/>
    <property type="evidence" value="ECO:0007669"/>
    <property type="project" value="TreeGrafter"/>
</dbReference>
<dbReference type="GO" id="GO:0006412">
    <property type="term" value="P:translation"/>
    <property type="evidence" value="ECO:0007669"/>
    <property type="project" value="UniProtKB-UniRule"/>
</dbReference>
<dbReference type="FunFam" id="3.30.860.10:FF:000001">
    <property type="entry name" value="30S ribosomal protein S19"/>
    <property type="match status" value="1"/>
</dbReference>
<dbReference type="Gene3D" id="3.30.860.10">
    <property type="entry name" value="30s Ribosomal Protein S19, Chain A"/>
    <property type="match status" value="1"/>
</dbReference>
<dbReference type="HAMAP" id="MF_00531">
    <property type="entry name" value="Ribosomal_uS19"/>
    <property type="match status" value="1"/>
</dbReference>
<dbReference type="InterPro" id="IPR002222">
    <property type="entry name" value="Ribosomal_uS19"/>
</dbReference>
<dbReference type="InterPro" id="IPR005732">
    <property type="entry name" value="Ribosomal_uS19_bac-type"/>
</dbReference>
<dbReference type="InterPro" id="IPR020934">
    <property type="entry name" value="Ribosomal_uS19_CS"/>
</dbReference>
<dbReference type="InterPro" id="IPR023575">
    <property type="entry name" value="Ribosomal_uS19_SF"/>
</dbReference>
<dbReference type="NCBIfam" id="TIGR01050">
    <property type="entry name" value="rpsS_bact"/>
    <property type="match status" value="1"/>
</dbReference>
<dbReference type="PANTHER" id="PTHR11880">
    <property type="entry name" value="RIBOSOMAL PROTEIN S19P FAMILY MEMBER"/>
    <property type="match status" value="1"/>
</dbReference>
<dbReference type="PANTHER" id="PTHR11880:SF8">
    <property type="entry name" value="SMALL RIBOSOMAL SUBUNIT PROTEIN US19M"/>
    <property type="match status" value="1"/>
</dbReference>
<dbReference type="Pfam" id="PF00203">
    <property type="entry name" value="Ribosomal_S19"/>
    <property type="match status" value="1"/>
</dbReference>
<dbReference type="PIRSF" id="PIRSF002144">
    <property type="entry name" value="Ribosomal_S19"/>
    <property type="match status" value="1"/>
</dbReference>
<dbReference type="PRINTS" id="PR00975">
    <property type="entry name" value="RIBOSOMALS19"/>
</dbReference>
<dbReference type="SUPFAM" id="SSF54570">
    <property type="entry name" value="Ribosomal protein S19"/>
    <property type="match status" value="1"/>
</dbReference>
<dbReference type="PROSITE" id="PS00323">
    <property type="entry name" value="RIBOSOMAL_S19"/>
    <property type="match status" value="1"/>
</dbReference>
<proteinExistence type="inferred from homology"/>
<evidence type="ECO:0000255" key="1">
    <source>
        <dbReference type="HAMAP-Rule" id="MF_00531"/>
    </source>
</evidence>
<evidence type="ECO:0000305" key="2"/>
<feature type="chain" id="PRO_0000129881" description="Small ribosomal subunit protein uS19">
    <location>
        <begin position="1"/>
        <end position="91"/>
    </location>
</feature>
<organism>
    <name type="scientific">Prochlorococcus marinus subsp. pastoris (strain CCMP1986 / NIES-2087 / MED4)</name>
    <dbReference type="NCBI Taxonomy" id="59919"/>
    <lineage>
        <taxon>Bacteria</taxon>
        <taxon>Bacillati</taxon>
        <taxon>Cyanobacteriota</taxon>
        <taxon>Cyanophyceae</taxon>
        <taxon>Synechococcales</taxon>
        <taxon>Prochlorococcaceae</taxon>
        <taxon>Prochlorococcus</taxon>
    </lineage>
</organism>